<dbReference type="EMBL" id="CP000720">
    <property type="protein sequence ID" value="ABS47388.1"/>
    <property type="molecule type" value="Genomic_DNA"/>
</dbReference>
<dbReference type="RefSeq" id="WP_011192424.1">
    <property type="nucleotide sequence ID" value="NC_009708.1"/>
</dbReference>
<dbReference type="SMR" id="A7FI95"/>
<dbReference type="GeneID" id="49785937"/>
<dbReference type="KEGG" id="ypi:YpsIP31758_2000"/>
<dbReference type="HOGENOM" id="CLU_041110_0_0_6"/>
<dbReference type="Proteomes" id="UP000002412">
    <property type="component" value="Chromosome"/>
</dbReference>
<dbReference type="GO" id="GO:0005886">
    <property type="term" value="C:plasma membrane"/>
    <property type="evidence" value="ECO:0007669"/>
    <property type="project" value="UniProtKB-SubCell"/>
</dbReference>
<dbReference type="GO" id="GO:0015385">
    <property type="term" value="F:sodium:proton antiporter activity"/>
    <property type="evidence" value="ECO:0007669"/>
    <property type="project" value="InterPro"/>
</dbReference>
<dbReference type="HAMAP" id="MF_01599">
    <property type="entry name" value="NhaB"/>
    <property type="match status" value="1"/>
</dbReference>
<dbReference type="InterPro" id="IPR004671">
    <property type="entry name" value="Na+/H+_antiporter_NhaB"/>
</dbReference>
<dbReference type="NCBIfam" id="TIGR00774">
    <property type="entry name" value="NhaB"/>
    <property type="match status" value="1"/>
</dbReference>
<dbReference type="NCBIfam" id="NF007093">
    <property type="entry name" value="PRK09547.1"/>
    <property type="match status" value="1"/>
</dbReference>
<dbReference type="PANTHER" id="PTHR43302:SF1">
    <property type="entry name" value="NA(+)_H(+) ANTIPORTER NHAB"/>
    <property type="match status" value="1"/>
</dbReference>
<dbReference type="PANTHER" id="PTHR43302">
    <property type="entry name" value="TRANSPORTER ARSB-RELATED"/>
    <property type="match status" value="1"/>
</dbReference>
<dbReference type="Pfam" id="PF06450">
    <property type="entry name" value="NhaB"/>
    <property type="match status" value="1"/>
</dbReference>
<name>NHAB_YERP3</name>
<feature type="chain" id="PRO_0000333158" description="Na(+)/H(+) antiporter NhaB">
    <location>
        <begin position="1"/>
        <end position="524"/>
    </location>
</feature>
<feature type="transmembrane region" description="Helical" evidence="1">
    <location>
        <begin position="13"/>
        <end position="33"/>
    </location>
</feature>
<feature type="transmembrane region" description="Helical" evidence="1">
    <location>
        <begin position="98"/>
        <end position="118"/>
    </location>
</feature>
<feature type="transmembrane region" description="Helical" evidence="1">
    <location>
        <begin position="140"/>
        <end position="160"/>
    </location>
</feature>
<feature type="transmembrane region" description="Helical" evidence="1">
    <location>
        <begin position="239"/>
        <end position="259"/>
    </location>
</feature>
<feature type="transmembrane region" description="Helical" evidence="1">
    <location>
        <begin position="304"/>
        <end position="324"/>
    </location>
</feature>
<feature type="transmembrane region" description="Helical" evidence="1">
    <location>
        <begin position="325"/>
        <end position="345"/>
    </location>
</feature>
<feature type="transmembrane region" description="Helical" evidence="1">
    <location>
        <begin position="358"/>
        <end position="378"/>
    </location>
</feature>
<feature type="transmembrane region" description="Helical" evidence="1">
    <location>
        <begin position="448"/>
        <end position="468"/>
    </location>
</feature>
<feature type="transmembrane region" description="Helical" evidence="1">
    <location>
        <begin position="479"/>
        <end position="499"/>
    </location>
</feature>
<proteinExistence type="inferred from homology"/>
<comment type="function">
    <text evidence="1">Na(+)/H(+) antiporter that extrudes sodium in exchange for external protons.</text>
</comment>
<comment type="catalytic activity">
    <reaction evidence="1">
        <text>2 Na(+)(in) + 3 H(+)(out) = 2 Na(+)(out) + 3 H(+)(in)</text>
        <dbReference type="Rhea" id="RHEA:29247"/>
        <dbReference type="ChEBI" id="CHEBI:15378"/>
        <dbReference type="ChEBI" id="CHEBI:29101"/>
    </reaction>
    <physiologicalReaction direction="left-to-right" evidence="1">
        <dbReference type="Rhea" id="RHEA:29248"/>
    </physiologicalReaction>
</comment>
<comment type="subcellular location">
    <subcellularLocation>
        <location evidence="1">Cell inner membrane</location>
        <topology evidence="1">Multi-pass membrane protein</topology>
    </subcellularLocation>
</comment>
<comment type="similarity">
    <text evidence="1">Belongs to the NhaB Na(+)/H(+) (TC 2.A.34) antiporter family.</text>
</comment>
<protein>
    <recommendedName>
        <fullName evidence="1">Na(+)/H(+) antiporter NhaB</fullName>
    </recommendedName>
    <alternativeName>
        <fullName evidence="1">Sodium/proton antiporter NhaB</fullName>
    </alternativeName>
</protein>
<evidence type="ECO:0000255" key="1">
    <source>
        <dbReference type="HAMAP-Rule" id="MF_01599"/>
    </source>
</evidence>
<sequence>MDITNRQAVLKNFLGNSPDWYKLAIMGFLIINPLVFFFVSPFVAGWMLVIEFIFTLAMALKCYPLQPGGLLAIQAVAIGMTSPHQVAEEIANNLEVLLLLVFMVAGIYFMKQLLLFVFTKLLLNIRSKTILSLAFCLASAFLSAFLDALTVIAVVISVSVGFYTIYHNVTSNHSDKDITDDSGIDNQDSHETLEQFRAFLRSLMMHAGVGTALGGVMTMVGEPQNLIIAKSAGWNFADFFIRMLPVTLPVFIFGLLVCLLVEKFKLFGYGAQLPERVRQVLTEYDQQASAKRTKQEKMKLIVQAIIGVWLVLALALHLAEVGLVGLSVIILATSFCGITNEHSLGKAFQEALPFTALLTVFFAVVAVIIEQSLFTPIIQFVLQASPSAQLSLFYLFNGLLSSVSDNVFVGTVYINEARSAFEHGIVSLQQFELLAVAINTGTNLPSVATPNGQAAFLFLLTSALAPLIRLSYGRMVYMALPYTLVMTIVGLLGVEFLLVPMTEWLTQAGWISLPHITNGVAIPH</sequence>
<accession>A7FI95</accession>
<gene>
    <name evidence="1" type="primary">nhaB</name>
    <name type="ordered locus">YpsIP31758_2000</name>
</gene>
<organism>
    <name type="scientific">Yersinia pseudotuberculosis serotype O:1b (strain IP 31758)</name>
    <dbReference type="NCBI Taxonomy" id="349747"/>
    <lineage>
        <taxon>Bacteria</taxon>
        <taxon>Pseudomonadati</taxon>
        <taxon>Pseudomonadota</taxon>
        <taxon>Gammaproteobacteria</taxon>
        <taxon>Enterobacterales</taxon>
        <taxon>Yersiniaceae</taxon>
        <taxon>Yersinia</taxon>
    </lineage>
</organism>
<reference key="1">
    <citation type="journal article" date="2007" name="PLoS Genet.">
        <title>The complete genome sequence of Yersinia pseudotuberculosis IP31758, the causative agent of Far East scarlet-like fever.</title>
        <authorList>
            <person name="Eppinger M."/>
            <person name="Rosovitz M.J."/>
            <person name="Fricke W.F."/>
            <person name="Rasko D.A."/>
            <person name="Kokorina G."/>
            <person name="Fayolle C."/>
            <person name="Lindler L.E."/>
            <person name="Carniel E."/>
            <person name="Ravel J."/>
        </authorList>
    </citation>
    <scope>NUCLEOTIDE SEQUENCE [LARGE SCALE GENOMIC DNA]</scope>
    <source>
        <strain>IP 31758</strain>
    </source>
</reference>
<keyword id="KW-0050">Antiport</keyword>
<keyword id="KW-0997">Cell inner membrane</keyword>
<keyword id="KW-1003">Cell membrane</keyword>
<keyword id="KW-0406">Ion transport</keyword>
<keyword id="KW-0472">Membrane</keyword>
<keyword id="KW-0915">Sodium</keyword>
<keyword id="KW-0739">Sodium transport</keyword>
<keyword id="KW-0812">Transmembrane</keyword>
<keyword id="KW-1133">Transmembrane helix</keyword>
<keyword id="KW-0813">Transport</keyword>